<feature type="chain" id="PRO_0000335238" description="DNA mismatch repair protein MutS">
    <location>
        <begin position="1"/>
        <end position="819"/>
    </location>
</feature>
<feature type="binding site" evidence="1">
    <location>
        <begin position="596"/>
        <end position="603"/>
    </location>
    <ligand>
        <name>ATP</name>
        <dbReference type="ChEBI" id="CHEBI:30616"/>
    </ligand>
</feature>
<keyword id="KW-0067">ATP-binding</keyword>
<keyword id="KW-0227">DNA damage</keyword>
<keyword id="KW-0234">DNA repair</keyword>
<keyword id="KW-0238">DNA-binding</keyword>
<keyword id="KW-0547">Nucleotide-binding</keyword>
<evidence type="ECO:0000255" key="1">
    <source>
        <dbReference type="HAMAP-Rule" id="MF_00096"/>
    </source>
</evidence>
<gene>
    <name evidence="1" type="primary">mutS</name>
    <name type="ordered locus">Tmel_1001</name>
</gene>
<sequence length="819" mass="93809">MGNLEKLTPMMKQYMGIKEKYKDAILLFRLGDFYEAFFEDAEIISKVLNIVLTKRQNAPMAGIPYHALDNYLKKLVESGYKVAICEQMEDASQAKGIVKREVTRVITPGTIIEDELLSNDNNYLMAVIFDEKYVSAFIDVSTGELFLKSFDTFLEFVDFVKISSISQVICSKELFDKLKEEIPHLFVEELDEWYFQGYEEKIKETYGLFSIEHLEITELEKKVLGALFKYLEYTLMENKPPQKPKRLEGSKYMILDSKTVENLSLIPGEKGKNLFDILNKTKTSMGARLLKKWILQPLKEKKEILERQKLVEAFYNDHLLLNEVREYLSGVYDLERILTRLGYGKVSPKDLVSLKRSLYLVPSIKDALRTNENLVSFAQSLNEFNEVVGILEKALYDEPSNAPGDGNVIKGGYSVELDDYRNLLFHSEEKLKEFQESEREKTGIQKLRVGFNQVFGYYIEVPKGQVKNVPDYYIRKQTLVNSERYITQELKEFEEKIMSAREKVELIEKSLFEELKQKLSEYIDGLRNLAQKLSELDAISNLAMVARLYGYTKPKFTGGEFYVKNARHAVVERYVSDFVANDIYMDDRRRMYIVTGPNMSGKSTYIRQVGLIAVMAQIGSFVPADDAEIPIFDRVFTRMGARDDISTGKSTFLIEMSEVALILEKATKKSLVLLDEVGRGTSTFDGISIAWAMSEYIYNEIGCETMFATHFTELTELSDVYEGIKNLTIEVRETNNGVVFLHKVVEGIADRSYGIEVAQIAGVPDGVVERAKEILDIISQKSELEKKVRVLKEGQLKKIKSKKKIPEGQLSLFEVGDIE</sequence>
<reference key="1">
    <citation type="submission" date="2007-05" db="EMBL/GenBank/DDBJ databases">
        <title>Complete sequence of Thermosipho melanesiensis BI429.</title>
        <authorList>
            <consortium name="US DOE Joint Genome Institute"/>
            <person name="Copeland A."/>
            <person name="Lucas S."/>
            <person name="Lapidus A."/>
            <person name="Barry K."/>
            <person name="Glavina del Rio T."/>
            <person name="Dalin E."/>
            <person name="Tice H."/>
            <person name="Pitluck S."/>
            <person name="Chertkov O."/>
            <person name="Brettin T."/>
            <person name="Bruce D."/>
            <person name="Detter J.C."/>
            <person name="Han C."/>
            <person name="Schmutz J."/>
            <person name="Larimer F."/>
            <person name="Land M."/>
            <person name="Hauser L."/>
            <person name="Kyrpides N."/>
            <person name="Mikhailova N."/>
            <person name="Nelson K."/>
            <person name="Gogarten J.P."/>
            <person name="Noll K."/>
            <person name="Richardson P."/>
        </authorList>
    </citation>
    <scope>NUCLEOTIDE SEQUENCE [LARGE SCALE GENOMIC DNA]</scope>
    <source>
        <strain>DSM 12029 / CIP 104789 / BI429</strain>
    </source>
</reference>
<protein>
    <recommendedName>
        <fullName evidence="1">DNA mismatch repair protein MutS</fullName>
    </recommendedName>
</protein>
<organism>
    <name type="scientific">Thermosipho melanesiensis (strain DSM 12029 / CIP 104789 / BI429)</name>
    <dbReference type="NCBI Taxonomy" id="391009"/>
    <lineage>
        <taxon>Bacteria</taxon>
        <taxon>Thermotogati</taxon>
        <taxon>Thermotogota</taxon>
        <taxon>Thermotogae</taxon>
        <taxon>Thermotogales</taxon>
        <taxon>Fervidobacteriaceae</taxon>
        <taxon>Thermosipho</taxon>
    </lineage>
</organism>
<name>MUTS_THEM4</name>
<proteinExistence type="inferred from homology"/>
<comment type="function">
    <text evidence="1">This protein is involved in the repair of mismatches in DNA. It is possible that it carries out the mismatch recognition step. This protein has a weak ATPase activity.</text>
</comment>
<comment type="similarity">
    <text evidence="1">Belongs to the DNA mismatch repair MutS family.</text>
</comment>
<accession>A6LLR1</accession>
<dbReference type="EMBL" id="CP000716">
    <property type="protein sequence ID" value="ABR30862.1"/>
    <property type="molecule type" value="Genomic_DNA"/>
</dbReference>
<dbReference type="RefSeq" id="WP_012057222.1">
    <property type="nucleotide sequence ID" value="NC_009616.1"/>
</dbReference>
<dbReference type="SMR" id="A6LLR1"/>
<dbReference type="STRING" id="391009.Tmel_1001"/>
<dbReference type="KEGG" id="tme:Tmel_1001"/>
<dbReference type="eggNOG" id="COG0249">
    <property type="taxonomic scope" value="Bacteria"/>
</dbReference>
<dbReference type="HOGENOM" id="CLU_002472_1_3_0"/>
<dbReference type="OrthoDB" id="9802448at2"/>
<dbReference type="Proteomes" id="UP000001110">
    <property type="component" value="Chromosome"/>
</dbReference>
<dbReference type="GO" id="GO:0005829">
    <property type="term" value="C:cytosol"/>
    <property type="evidence" value="ECO:0007669"/>
    <property type="project" value="TreeGrafter"/>
</dbReference>
<dbReference type="GO" id="GO:0005524">
    <property type="term" value="F:ATP binding"/>
    <property type="evidence" value="ECO:0007669"/>
    <property type="project" value="UniProtKB-UniRule"/>
</dbReference>
<dbReference type="GO" id="GO:0140664">
    <property type="term" value="F:ATP-dependent DNA damage sensor activity"/>
    <property type="evidence" value="ECO:0007669"/>
    <property type="project" value="InterPro"/>
</dbReference>
<dbReference type="GO" id="GO:0003684">
    <property type="term" value="F:damaged DNA binding"/>
    <property type="evidence" value="ECO:0007669"/>
    <property type="project" value="UniProtKB-UniRule"/>
</dbReference>
<dbReference type="GO" id="GO:0030983">
    <property type="term" value="F:mismatched DNA binding"/>
    <property type="evidence" value="ECO:0007669"/>
    <property type="project" value="InterPro"/>
</dbReference>
<dbReference type="GO" id="GO:0006298">
    <property type="term" value="P:mismatch repair"/>
    <property type="evidence" value="ECO:0007669"/>
    <property type="project" value="UniProtKB-UniRule"/>
</dbReference>
<dbReference type="CDD" id="cd03284">
    <property type="entry name" value="ABC_MutS1"/>
    <property type="match status" value="1"/>
</dbReference>
<dbReference type="FunFam" id="3.40.1170.10:FF:000001">
    <property type="entry name" value="DNA mismatch repair protein MutS"/>
    <property type="match status" value="1"/>
</dbReference>
<dbReference type="FunFam" id="3.40.50.300:FF:000870">
    <property type="entry name" value="MutS protein homolog 4"/>
    <property type="match status" value="1"/>
</dbReference>
<dbReference type="Gene3D" id="1.10.1420.10">
    <property type="match status" value="2"/>
</dbReference>
<dbReference type="Gene3D" id="3.40.1170.10">
    <property type="entry name" value="DNA repair protein MutS, domain I"/>
    <property type="match status" value="1"/>
</dbReference>
<dbReference type="Gene3D" id="3.30.420.110">
    <property type="entry name" value="MutS, connector domain"/>
    <property type="match status" value="1"/>
</dbReference>
<dbReference type="Gene3D" id="3.40.50.300">
    <property type="entry name" value="P-loop containing nucleotide triphosphate hydrolases"/>
    <property type="match status" value="1"/>
</dbReference>
<dbReference type="HAMAP" id="MF_00096">
    <property type="entry name" value="MutS"/>
    <property type="match status" value="1"/>
</dbReference>
<dbReference type="InterPro" id="IPR005748">
    <property type="entry name" value="DNA_mismatch_repair_MutS"/>
</dbReference>
<dbReference type="InterPro" id="IPR007695">
    <property type="entry name" value="DNA_mismatch_repair_MutS-lik_N"/>
</dbReference>
<dbReference type="InterPro" id="IPR017261">
    <property type="entry name" value="DNA_mismatch_repair_MutS/MSH"/>
</dbReference>
<dbReference type="InterPro" id="IPR000432">
    <property type="entry name" value="DNA_mismatch_repair_MutS_C"/>
</dbReference>
<dbReference type="InterPro" id="IPR007861">
    <property type="entry name" value="DNA_mismatch_repair_MutS_clamp"/>
</dbReference>
<dbReference type="InterPro" id="IPR007696">
    <property type="entry name" value="DNA_mismatch_repair_MutS_core"/>
</dbReference>
<dbReference type="InterPro" id="IPR016151">
    <property type="entry name" value="DNA_mismatch_repair_MutS_N"/>
</dbReference>
<dbReference type="InterPro" id="IPR036187">
    <property type="entry name" value="DNA_mismatch_repair_MutS_sf"/>
</dbReference>
<dbReference type="InterPro" id="IPR007860">
    <property type="entry name" value="DNA_mmatch_repair_MutS_con_dom"/>
</dbReference>
<dbReference type="InterPro" id="IPR045076">
    <property type="entry name" value="MutS"/>
</dbReference>
<dbReference type="InterPro" id="IPR036678">
    <property type="entry name" value="MutS_con_dom_sf"/>
</dbReference>
<dbReference type="InterPro" id="IPR027417">
    <property type="entry name" value="P-loop_NTPase"/>
</dbReference>
<dbReference type="NCBIfam" id="TIGR01070">
    <property type="entry name" value="mutS1"/>
    <property type="match status" value="1"/>
</dbReference>
<dbReference type="NCBIfam" id="NF003810">
    <property type="entry name" value="PRK05399.1"/>
    <property type="match status" value="1"/>
</dbReference>
<dbReference type="PANTHER" id="PTHR11361:SF34">
    <property type="entry name" value="DNA MISMATCH REPAIR PROTEIN MSH1, MITOCHONDRIAL"/>
    <property type="match status" value="1"/>
</dbReference>
<dbReference type="PANTHER" id="PTHR11361">
    <property type="entry name" value="DNA MISMATCH REPAIR PROTEIN MUTS FAMILY MEMBER"/>
    <property type="match status" value="1"/>
</dbReference>
<dbReference type="Pfam" id="PF01624">
    <property type="entry name" value="MutS_I"/>
    <property type="match status" value="1"/>
</dbReference>
<dbReference type="Pfam" id="PF05188">
    <property type="entry name" value="MutS_II"/>
    <property type="match status" value="1"/>
</dbReference>
<dbReference type="Pfam" id="PF05192">
    <property type="entry name" value="MutS_III"/>
    <property type="match status" value="1"/>
</dbReference>
<dbReference type="Pfam" id="PF05190">
    <property type="entry name" value="MutS_IV"/>
    <property type="match status" value="1"/>
</dbReference>
<dbReference type="Pfam" id="PF00488">
    <property type="entry name" value="MutS_V"/>
    <property type="match status" value="1"/>
</dbReference>
<dbReference type="PIRSF" id="PIRSF037677">
    <property type="entry name" value="DNA_mis_repair_Msh6"/>
    <property type="match status" value="1"/>
</dbReference>
<dbReference type="SMART" id="SM00534">
    <property type="entry name" value="MUTSac"/>
    <property type="match status" value="1"/>
</dbReference>
<dbReference type="SMART" id="SM00533">
    <property type="entry name" value="MUTSd"/>
    <property type="match status" value="1"/>
</dbReference>
<dbReference type="SUPFAM" id="SSF55271">
    <property type="entry name" value="DNA repair protein MutS, domain I"/>
    <property type="match status" value="1"/>
</dbReference>
<dbReference type="SUPFAM" id="SSF53150">
    <property type="entry name" value="DNA repair protein MutS, domain II"/>
    <property type="match status" value="1"/>
</dbReference>
<dbReference type="SUPFAM" id="SSF48334">
    <property type="entry name" value="DNA repair protein MutS, domain III"/>
    <property type="match status" value="1"/>
</dbReference>
<dbReference type="SUPFAM" id="SSF52540">
    <property type="entry name" value="P-loop containing nucleoside triphosphate hydrolases"/>
    <property type="match status" value="1"/>
</dbReference>
<dbReference type="PROSITE" id="PS00486">
    <property type="entry name" value="DNA_MISMATCH_REPAIR_2"/>
    <property type="match status" value="1"/>
</dbReference>